<keyword id="KW-0687">Ribonucleoprotein</keyword>
<keyword id="KW-0689">Ribosomal protein</keyword>
<gene>
    <name evidence="1" type="primary">rpmF</name>
    <name evidence="1" type="synonym">rpl32</name>
</gene>
<name>RL32_ACHLA</name>
<evidence type="ECO:0000255" key="1">
    <source>
        <dbReference type="HAMAP-Rule" id="MF_00340"/>
    </source>
</evidence>
<evidence type="ECO:0000305" key="2"/>
<organism>
    <name type="scientific">Acholeplasma laidlawii</name>
    <dbReference type="NCBI Taxonomy" id="2148"/>
    <lineage>
        <taxon>Bacteria</taxon>
        <taxon>Bacillati</taxon>
        <taxon>Mycoplasmatota</taxon>
        <taxon>Mollicutes</taxon>
        <taxon>Acholeplasmatales</taxon>
        <taxon>Acholeplasmataceae</taxon>
        <taxon>Acholeplasma</taxon>
    </lineage>
</organism>
<dbReference type="EMBL" id="AF281816">
    <property type="protein sequence ID" value="AAM43826.1"/>
    <property type="molecule type" value="Genomic_DNA"/>
</dbReference>
<dbReference type="RefSeq" id="WP_012242503.1">
    <property type="nucleotide sequence ID" value="NZ_VKID01000001.1"/>
</dbReference>
<dbReference type="SMR" id="Q8L395"/>
<dbReference type="GeneID" id="41338732"/>
<dbReference type="OMA" id="KAKRNMR"/>
<dbReference type="GO" id="GO:0015934">
    <property type="term" value="C:large ribosomal subunit"/>
    <property type="evidence" value="ECO:0007669"/>
    <property type="project" value="InterPro"/>
</dbReference>
<dbReference type="GO" id="GO:0003735">
    <property type="term" value="F:structural constituent of ribosome"/>
    <property type="evidence" value="ECO:0007669"/>
    <property type="project" value="InterPro"/>
</dbReference>
<dbReference type="GO" id="GO:0006412">
    <property type="term" value="P:translation"/>
    <property type="evidence" value="ECO:0007669"/>
    <property type="project" value="UniProtKB-UniRule"/>
</dbReference>
<dbReference type="HAMAP" id="MF_00340">
    <property type="entry name" value="Ribosomal_bL32"/>
    <property type="match status" value="1"/>
</dbReference>
<dbReference type="InterPro" id="IPR002677">
    <property type="entry name" value="Ribosomal_bL32"/>
</dbReference>
<dbReference type="InterPro" id="IPR044957">
    <property type="entry name" value="Ribosomal_bL32_bact"/>
</dbReference>
<dbReference type="InterPro" id="IPR011332">
    <property type="entry name" value="Ribosomal_zn-bd"/>
</dbReference>
<dbReference type="NCBIfam" id="TIGR01031">
    <property type="entry name" value="rpmF_bact"/>
    <property type="match status" value="1"/>
</dbReference>
<dbReference type="PANTHER" id="PTHR35534">
    <property type="entry name" value="50S RIBOSOMAL PROTEIN L32"/>
    <property type="match status" value="1"/>
</dbReference>
<dbReference type="PANTHER" id="PTHR35534:SF1">
    <property type="entry name" value="LARGE RIBOSOMAL SUBUNIT PROTEIN BL32"/>
    <property type="match status" value="1"/>
</dbReference>
<dbReference type="Pfam" id="PF01783">
    <property type="entry name" value="Ribosomal_L32p"/>
    <property type="match status" value="1"/>
</dbReference>
<dbReference type="SUPFAM" id="SSF57829">
    <property type="entry name" value="Zn-binding ribosomal proteins"/>
    <property type="match status" value="1"/>
</dbReference>
<proteinExistence type="inferred from homology"/>
<comment type="similarity">
    <text evidence="1">Belongs to the bacterial ribosomal protein bL32 family.</text>
</comment>
<protein>
    <recommendedName>
        <fullName evidence="1">Large ribosomal subunit protein bL32</fullName>
    </recommendedName>
    <alternativeName>
        <fullName evidence="2">50S ribosomal protein L32</fullName>
    </alternativeName>
</protein>
<reference key="1">
    <citation type="submission" date="2000-06" db="EMBL/GenBank/DDBJ databases">
        <title>Cloning, sequencing and analysis of dnaK-operon from Acholeplasma laidlawii.</title>
        <authorList>
            <person name="Usoskin D.G."/>
            <person name="Vonski M.S."/>
            <person name="Drapchinskaya N.L."/>
            <person name="Borchsenius S.N."/>
        </authorList>
    </citation>
    <scope>NUCLEOTIDE SEQUENCE [GENOMIC DNA]</scope>
    <source>
        <strain>ATCC 23206 / DSM 23060 / NBRC 14400 / NCTC 10116 / PG-8</strain>
    </source>
</reference>
<sequence length="63" mass="7381">MAVPFRRQSKGRKRRRRSHYKLKTPTIVVDPQTGEFTLPHRVTPNSGYYKGQLVLAKKVKKED</sequence>
<accession>Q8L395</accession>
<feature type="chain" id="PRO_0000172296" description="Large ribosomal subunit protein bL32">
    <location>
        <begin position="1"/>
        <end position="63"/>
    </location>
</feature>